<dbReference type="EMBL" id="AE017220">
    <property type="protein sequence ID" value="AAX67663.1"/>
    <property type="molecule type" value="Genomic_DNA"/>
</dbReference>
<dbReference type="RefSeq" id="WP_000831330.1">
    <property type="nucleotide sequence ID" value="NC_006905.1"/>
</dbReference>
<dbReference type="SMR" id="Q57HZ9"/>
<dbReference type="GeneID" id="98190980"/>
<dbReference type="KEGG" id="sec:SCH_3757"/>
<dbReference type="HOGENOM" id="CLU_129938_2_1_6"/>
<dbReference type="Proteomes" id="UP000000538">
    <property type="component" value="Chromosome"/>
</dbReference>
<dbReference type="GO" id="GO:1990904">
    <property type="term" value="C:ribonucleoprotein complex"/>
    <property type="evidence" value="ECO:0007669"/>
    <property type="project" value="UniProtKB-KW"/>
</dbReference>
<dbReference type="GO" id="GO:0005840">
    <property type="term" value="C:ribosome"/>
    <property type="evidence" value="ECO:0007669"/>
    <property type="project" value="UniProtKB-KW"/>
</dbReference>
<dbReference type="GO" id="GO:0003735">
    <property type="term" value="F:structural constituent of ribosome"/>
    <property type="evidence" value="ECO:0007669"/>
    <property type="project" value="InterPro"/>
</dbReference>
<dbReference type="GO" id="GO:0006412">
    <property type="term" value="P:translation"/>
    <property type="evidence" value="ECO:0007669"/>
    <property type="project" value="UniProtKB-UniRule"/>
</dbReference>
<dbReference type="FunFam" id="1.10.287.3980:FF:000001">
    <property type="entry name" value="Mitochondrial ribosomal protein L34"/>
    <property type="match status" value="1"/>
</dbReference>
<dbReference type="Gene3D" id="1.10.287.3980">
    <property type="match status" value="1"/>
</dbReference>
<dbReference type="HAMAP" id="MF_00391">
    <property type="entry name" value="Ribosomal_bL34"/>
    <property type="match status" value="1"/>
</dbReference>
<dbReference type="InterPro" id="IPR000271">
    <property type="entry name" value="Ribosomal_bL34"/>
</dbReference>
<dbReference type="InterPro" id="IPR020939">
    <property type="entry name" value="Ribosomal_bL34_CS"/>
</dbReference>
<dbReference type="NCBIfam" id="TIGR01030">
    <property type="entry name" value="rpmH_bact"/>
    <property type="match status" value="1"/>
</dbReference>
<dbReference type="PANTHER" id="PTHR14503:SF4">
    <property type="entry name" value="LARGE RIBOSOMAL SUBUNIT PROTEIN BL34M"/>
    <property type="match status" value="1"/>
</dbReference>
<dbReference type="PANTHER" id="PTHR14503">
    <property type="entry name" value="MITOCHONDRIAL RIBOSOMAL PROTEIN 34 FAMILY MEMBER"/>
    <property type="match status" value="1"/>
</dbReference>
<dbReference type="Pfam" id="PF00468">
    <property type="entry name" value="Ribosomal_L34"/>
    <property type="match status" value="1"/>
</dbReference>
<dbReference type="PROSITE" id="PS00784">
    <property type="entry name" value="RIBOSOMAL_L34"/>
    <property type="match status" value="1"/>
</dbReference>
<gene>
    <name evidence="1" type="primary">rpmH</name>
    <name type="ordered locus">SCH_3757</name>
</gene>
<evidence type="ECO:0000255" key="1">
    <source>
        <dbReference type="HAMAP-Rule" id="MF_00391"/>
    </source>
</evidence>
<evidence type="ECO:0000305" key="2"/>
<accession>Q57HZ9</accession>
<sequence length="46" mass="5380">MKRTFQPSVLKRNRSHGFRARMATKNGRQVLARRRAKGRARLTVSK</sequence>
<protein>
    <recommendedName>
        <fullName evidence="1">Large ribosomal subunit protein bL34</fullName>
    </recommendedName>
    <alternativeName>
        <fullName evidence="2">50S ribosomal protein L34</fullName>
    </alternativeName>
</protein>
<keyword id="KW-0687">Ribonucleoprotein</keyword>
<keyword id="KW-0689">Ribosomal protein</keyword>
<feature type="chain" id="PRO_0000187453" description="Large ribosomal subunit protein bL34">
    <location>
        <begin position="1"/>
        <end position="46"/>
    </location>
</feature>
<name>RL34_SALCH</name>
<proteinExistence type="inferred from homology"/>
<reference key="1">
    <citation type="journal article" date="2005" name="Nucleic Acids Res.">
        <title>The genome sequence of Salmonella enterica serovar Choleraesuis, a highly invasive and resistant zoonotic pathogen.</title>
        <authorList>
            <person name="Chiu C.-H."/>
            <person name="Tang P."/>
            <person name="Chu C."/>
            <person name="Hu S."/>
            <person name="Bao Q."/>
            <person name="Yu J."/>
            <person name="Chou Y.-Y."/>
            <person name="Wang H.-S."/>
            <person name="Lee Y.-S."/>
        </authorList>
    </citation>
    <scope>NUCLEOTIDE SEQUENCE [LARGE SCALE GENOMIC DNA]</scope>
    <source>
        <strain>SC-B67</strain>
    </source>
</reference>
<comment type="similarity">
    <text evidence="1">Belongs to the bacterial ribosomal protein bL34 family.</text>
</comment>
<organism>
    <name type="scientific">Salmonella choleraesuis (strain SC-B67)</name>
    <dbReference type="NCBI Taxonomy" id="321314"/>
    <lineage>
        <taxon>Bacteria</taxon>
        <taxon>Pseudomonadati</taxon>
        <taxon>Pseudomonadota</taxon>
        <taxon>Gammaproteobacteria</taxon>
        <taxon>Enterobacterales</taxon>
        <taxon>Enterobacteriaceae</taxon>
        <taxon>Salmonella</taxon>
    </lineage>
</organism>